<comment type="function">
    <text>MRS4 suppresses a mitochondrial splice defect in the first intron of the COB gene. It may act as a carrier, exerting its suppressor activity via modulation of solute concentrations in the mitochondrion (possibly of cations). Not essential.</text>
</comment>
<comment type="interaction">
    <interactant intactId="EBI-11297">
        <id>P23500</id>
    </interactant>
    <interactant intactId="EBI-25914">
        <id>P40364</id>
        <label>MPM1</label>
    </interactant>
    <organismsDiffer>false</organismsDiffer>
    <experiments>2</experiments>
</comment>
<comment type="subcellular location">
    <subcellularLocation>
        <location>Mitochondrion inner membrane</location>
        <topology>Multi-pass membrane protein</topology>
    </subcellularLocation>
</comment>
<comment type="miscellaneous">
    <text evidence="2">Present with 1340 molecules/cell in log phase SD medium.</text>
</comment>
<comment type="similarity">
    <text evidence="3">Belongs to the mitochondrial carrier (TC 2.A.29) family.</text>
</comment>
<accession>P23500</accession>
<accession>D6VXB3</accession>
<dbReference type="EMBL" id="X56444">
    <property type="protein sequence ID" value="CAA39828.1"/>
    <property type="molecule type" value="Genomic_DNA"/>
</dbReference>
<dbReference type="EMBL" id="Z28277">
    <property type="protein sequence ID" value="CAA82130.1"/>
    <property type="molecule type" value="Genomic_DNA"/>
</dbReference>
<dbReference type="EMBL" id="BK006944">
    <property type="protein sequence ID" value="DAA09203.1"/>
    <property type="molecule type" value="Genomic_DNA"/>
</dbReference>
<dbReference type="PIR" id="S13533">
    <property type="entry name" value="S13533"/>
</dbReference>
<dbReference type="RefSeq" id="NP_012978.1">
    <property type="nucleotide sequence ID" value="NM_001179842.1"/>
</dbReference>
<dbReference type="SMR" id="P23500"/>
<dbReference type="BioGRID" id="34183">
    <property type="interactions" value="83"/>
</dbReference>
<dbReference type="DIP" id="DIP-4751N"/>
<dbReference type="FunCoup" id="P23500">
    <property type="interactions" value="695"/>
</dbReference>
<dbReference type="IntAct" id="P23500">
    <property type="interactions" value="23"/>
</dbReference>
<dbReference type="STRING" id="4932.YKR052C"/>
<dbReference type="TCDB" id="2.A.29.5.2">
    <property type="family name" value="the mitochondrial carrier (mc) family"/>
</dbReference>
<dbReference type="iPTMnet" id="P23500"/>
<dbReference type="PaxDb" id="4932-YKR052C"/>
<dbReference type="PeptideAtlas" id="P23500"/>
<dbReference type="EnsemblFungi" id="YKR052C_mRNA">
    <property type="protein sequence ID" value="YKR052C"/>
    <property type="gene ID" value="YKR052C"/>
</dbReference>
<dbReference type="GeneID" id="853926"/>
<dbReference type="KEGG" id="sce:YKR052C"/>
<dbReference type="AGR" id="SGD:S000001760"/>
<dbReference type="SGD" id="S000001760">
    <property type="gene designation" value="MRS4"/>
</dbReference>
<dbReference type="VEuPathDB" id="FungiDB:YKR052C"/>
<dbReference type="eggNOG" id="KOG0760">
    <property type="taxonomic scope" value="Eukaryota"/>
</dbReference>
<dbReference type="GeneTree" id="ENSGT00940000169345"/>
<dbReference type="HOGENOM" id="CLU_015166_3_1_1"/>
<dbReference type="InParanoid" id="P23500"/>
<dbReference type="OMA" id="MYNSQHQ"/>
<dbReference type="OrthoDB" id="43906at2759"/>
<dbReference type="BioCyc" id="YEAST:G3O-32022-MONOMER"/>
<dbReference type="BioGRID-ORCS" id="853926">
    <property type="hits" value="4 hits in 10 CRISPR screens"/>
</dbReference>
<dbReference type="PRO" id="PR:P23500"/>
<dbReference type="Proteomes" id="UP000002311">
    <property type="component" value="Chromosome XI"/>
</dbReference>
<dbReference type="RNAct" id="P23500">
    <property type="molecule type" value="protein"/>
</dbReference>
<dbReference type="GO" id="GO:0005743">
    <property type="term" value="C:mitochondrial inner membrane"/>
    <property type="evidence" value="ECO:0000314"/>
    <property type="project" value="SGD"/>
</dbReference>
<dbReference type="GO" id="GO:0031966">
    <property type="term" value="C:mitochondrial membrane"/>
    <property type="evidence" value="ECO:0000318"/>
    <property type="project" value="GO_Central"/>
</dbReference>
<dbReference type="GO" id="GO:0005739">
    <property type="term" value="C:mitochondrion"/>
    <property type="evidence" value="ECO:0007005"/>
    <property type="project" value="SGD"/>
</dbReference>
<dbReference type="GO" id="GO:0015093">
    <property type="term" value="F:ferrous iron transmembrane transporter activity"/>
    <property type="evidence" value="ECO:0000269"/>
    <property type="project" value="Reactome"/>
</dbReference>
<dbReference type="GO" id="GO:0005381">
    <property type="term" value="F:iron ion transmembrane transporter activity"/>
    <property type="evidence" value="ECO:0000315"/>
    <property type="project" value="SGD"/>
</dbReference>
<dbReference type="GO" id="GO:0048250">
    <property type="term" value="P:iron import into the mitochondrion"/>
    <property type="evidence" value="ECO:0000314"/>
    <property type="project" value="SGD"/>
</dbReference>
<dbReference type="GO" id="GO:0006397">
    <property type="term" value="P:mRNA processing"/>
    <property type="evidence" value="ECO:0007669"/>
    <property type="project" value="UniProtKB-KW"/>
</dbReference>
<dbReference type="FunFam" id="1.50.40.10:FF:000104">
    <property type="entry name" value="Iron transporter"/>
    <property type="match status" value="1"/>
</dbReference>
<dbReference type="FunFam" id="1.50.40.10:FF:000054">
    <property type="entry name" value="Mitochondrial carrier"/>
    <property type="match status" value="1"/>
</dbReference>
<dbReference type="Gene3D" id="1.50.40.10">
    <property type="entry name" value="Mitochondrial carrier domain"/>
    <property type="match status" value="2"/>
</dbReference>
<dbReference type="InterPro" id="IPR002067">
    <property type="entry name" value="Mit_carrier"/>
</dbReference>
<dbReference type="InterPro" id="IPR018108">
    <property type="entry name" value="Mitochondrial_sb/sol_carrier"/>
</dbReference>
<dbReference type="InterPro" id="IPR023395">
    <property type="entry name" value="Mt_carrier_dom_sf"/>
</dbReference>
<dbReference type="PANTHER" id="PTHR45758:SF4">
    <property type="entry name" value="MITOFERRIN-1"/>
    <property type="match status" value="1"/>
</dbReference>
<dbReference type="PANTHER" id="PTHR45758">
    <property type="entry name" value="MITOFERRIN-1-RELATED"/>
    <property type="match status" value="1"/>
</dbReference>
<dbReference type="Pfam" id="PF00153">
    <property type="entry name" value="Mito_carr"/>
    <property type="match status" value="3"/>
</dbReference>
<dbReference type="PRINTS" id="PR00926">
    <property type="entry name" value="MITOCARRIER"/>
</dbReference>
<dbReference type="SUPFAM" id="SSF103506">
    <property type="entry name" value="Mitochondrial carrier"/>
    <property type="match status" value="1"/>
</dbReference>
<dbReference type="PROSITE" id="PS50920">
    <property type="entry name" value="SOLCAR"/>
    <property type="match status" value="3"/>
</dbReference>
<evidence type="ECO:0000255" key="1"/>
<evidence type="ECO:0000269" key="2">
    <source>
    </source>
</evidence>
<evidence type="ECO:0000305" key="3"/>
<protein>
    <recommendedName>
        <fullName>Mitochondrial RNA-splicing protein MRS4</fullName>
    </recommendedName>
</protein>
<sequence>MNTSELSIAEEIDYEALPSHAPLHSQLLAGAFAGIMEHSLMFPIDALKTRVQAAGLNKAASTGMISQISKISTMEGSMALWKGVQSVILGAGPAHAVYFGTYEFCKARLISPEDMQTHQPMKTALSGTIATIAADALMNPFDTVKQRLQLDTNLRVWNVTKQIYQNEGFAAFYYSYPTTLAMNIPFAAFNFMIYESASKFFNPQNSYNPLIHCLCGGISGATCAALTTPLDCIKTVLQVRGSETVSIEIMKDANTFGRASRAILEVHGWKGFWRGLKPRIVANIPATAISWTAYECAKHFLMKN</sequence>
<organism>
    <name type="scientific">Saccharomyces cerevisiae (strain ATCC 204508 / S288c)</name>
    <name type="common">Baker's yeast</name>
    <dbReference type="NCBI Taxonomy" id="559292"/>
    <lineage>
        <taxon>Eukaryota</taxon>
        <taxon>Fungi</taxon>
        <taxon>Dikarya</taxon>
        <taxon>Ascomycota</taxon>
        <taxon>Saccharomycotina</taxon>
        <taxon>Saccharomycetes</taxon>
        <taxon>Saccharomycetales</taxon>
        <taxon>Saccharomycetaceae</taxon>
        <taxon>Saccharomyces</taxon>
    </lineage>
</organism>
<name>MRS4_YEAST</name>
<keyword id="KW-0472">Membrane</keyword>
<keyword id="KW-0496">Mitochondrion</keyword>
<keyword id="KW-0999">Mitochondrion inner membrane</keyword>
<keyword id="KW-0507">mRNA processing</keyword>
<keyword id="KW-1185">Reference proteome</keyword>
<keyword id="KW-0677">Repeat</keyword>
<keyword id="KW-0812">Transmembrane</keyword>
<keyword id="KW-1133">Transmembrane helix</keyword>
<keyword id="KW-0813">Transport</keyword>
<reference key="1">
    <citation type="journal article" date="1991" name="J. Mol. Biol.">
        <title>MRS3 and MRS4, two suppressors of mtRNA splicing defects in yeast, are new members of the mitochondrial carrier family.</title>
        <authorList>
            <person name="Wiesenberger G."/>
            <person name="Link T.A."/>
            <person name="von Ahsen U."/>
            <person name="Waldherr M."/>
            <person name="Schweyen R.J."/>
        </authorList>
    </citation>
    <scope>NUCLEOTIDE SEQUENCE [GENOMIC DNA]</scope>
    <source>
        <strain>M1301</strain>
    </source>
</reference>
<reference key="2">
    <citation type="journal article" date="1994" name="Nature">
        <title>Complete DNA sequence of yeast chromosome XI.</title>
        <authorList>
            <person name="Dujon B."/>
            <person name="Alexandraki D."/>
            <person name="Andre B."/>
            <person name="Ansorge W."/>
            <person name="Baladron V."/>
            <person name="Ballesta J.P.G."/>
            <person name="Banrevi A."/>
            <person name="Bolle P.-A."/>
            <person name="Bolotin-Fukuhara M."/>
            <person name="Bossier P."/>
            <person name="Bou G."/>
            <person name="Boyer J."/>
            <person name="Buitrago M.J."/>
            <person name="Cheret G."/>
            <person name="Colleaux L."/>
            <person name="Daignan-Fornier B."/>
            <person name="del Rey F."/>
            <person name="Dion C."/>
            <person name="Domdey H."/>
            <person name="Duesterhoeft A."/>
            <person name="Duesterhus S."/>
            <person name="Entian K.-D."/>
            <person name="Erfle H."/>
            <person name="Esteban P.F."/>
            <person name="Feldmann H."/>
            <person name="Fernandes L."/>
            <person name="Fobo G.M."/>
            <person name="Fritz C."/>
            <person name="Fukuhara H."/>
            <person name="Gabel C."/>
            <person name="Gaillon L."/>
            <person name="Garcia-Cantalejo J.M."/>
            <person name="Garcia-Ramirez J.J."/>
            <person name="Gent M.E."/>
            <person name="Ghazvini M."/>
            <person name="Goffeau A."/>
            <person name="Gonzalez A."/>
            <person name="Grothues D."/>
            <person name="Guerreiro P."/>
            <person name="Hegemann J.H."/>
            <person name="Hewitt N."/>
            <person name="Hilger F."/>
            <person name="Hollenberg C.P."/>
            <person name="Horaitis O."/>
            <person name="Indge K.J."/>
            <person name="Jacquier A."/>
            <person name="James C.M."/>
            <person name="Jauniaux J.-C."/>
            <person name="Jimenez A."/>
            <person name="Keuchel H."/>
            <person name="Kirchrath L."/>
            <person name="Kleine K."/>
            <person name="Koetter P."/>
            <person name="Legrain P."/>
            <person name="Liebl S."/>
            <person name="Louis E.J."/>
            <person name="Maia e Silva A."/>
            <person name="Marck C."/>
            <person name="Monnier A.-L."/>
            <person name="Moestl D."/>
            <person name="Mueller S."/>
            <person name="Obermaier B."/>
            <person name="Oliver S.G."/>
            <person name="Pallier C."/>
            <person name="Pascolo S."/>
            <person name="Pfeiffer F."/>
            <person name="Philippsen P."/>
            <person name="Planta R.J."/>
            <person name="Pohl F.M."/>
            <person name="Pohl T.M."/>
            <person name="Poehlmann R."/>
            <person name="Portetelle D."/>
            <person name="Purnelle B."/>
            <person name="Puzos V."/>
            <person name="Ramezani Rad M."/>
            <person name="Rasmussen S.W."/>
            <person name="Remacha M.A."/>
            <person name="Revuelta J.L."/>
            <person name="Richard G.-F."/>
            <person name="Rieger M."/>
            <person name="Rodrigues-Pousada C."/>
            <person name="Rose M."/>
            <person name="Rupp T."/>
            <person name="Santos M.A."/>
            <person name="Schwager C."/>
            <person name="Sensen C."/>
            <person name="Skala J."/>
            <person name="Soares H."/>
            <person name="Sor F."/>
            <person name="Stegemann J."/>
            <person name="Tettelin H."/>
            <person name="Thierry A."/>
            <person name="Tzermia M."/>
            <person name="Urrestarazu L.A."/>
            <person name="van Dyck L."/>
            <person name="van Vliet-Reedijk J.C."/>
            <person name="Valens M."/>
            <person name="Vandenbol M."/>
            <person name="Vilela C."/>
            <person name="Vissers S."/>
            <person name="von Wettstein D."/>
            <person name="Voss H."/>
            <person name="Wiemann S."/>
            <person name="Xu G."/>
            <person name="Zimmermann J."/>
            <person name="Haasemann M."/>
            <person name="Becker I."/>
            <person name="Mewes H.-W."/>
        </authorList>
    </citation>
    <scope>NUCLEOTIDE SEQUENCE [LARGE SCALE GENOMIC DNA]</scope>
    <source>
        <strain>ATCC 204508 / S288c</strain>
    </source>
</reference>
<reference key="3">
    <citation type="journal article" date="2014" name="G3 (Bethesda)">
        <title>The reference genome sequence of Saccharomyces cerevisiae: Then and now.</title>
        <authorList>
            <person name="Engel S.R."/>
            <person name="Dietrich F.S."/>
            <person name="Fisk D.G."/>
            <person name="Binkley G."/>
            <person name="Balakrishnan R."/>
            <person name="Costanzo M.C."/>
            <person name="Dwight S.S."/>
            <person name="Hitz B.C."/>
            <person name="Karra K."/>
            <person name="Nash R.S."/>
            <person name="Weng S."/>
            <person name="Wong E.D."/>
            <person name="Lloyd P."/>
            <person name="Skrzypek M.S."/>
            <person name="Miyasato S.R."/>
            <person name="Simison M."/>
            <person name="Cherry J.M."/>
        </authorList>
    </citation>
    <scope>GENOME REANNOTATION</scope>
    <source>
        <strain>ATCC 204508 / S288c</strain>
    </source>
</reference>
<reference key="4">
    <citation type="journal article" date="2003" name="Nature">
        <title>Global analysis of protein expression in yeast.</title>
        <authorList>
            <person name="Ghaemmaghami S."/>
            <person name="Huh W.-K."/>
            <person name="Bower K."/>
            <person name="Howson R.W."/>
            <person name="Belle A."/>
            <person name="Dephoure N."/>
            <person name="O'Shea E.K."/>
            <person name="Weissman J.S."/>
        </authorList>
    </citation>
    <scope>LEVEL OF PROTEIN EXPRESSION [LARGE SCALE ANALYSIS]</scope>
</reference>
<proteinExistence type="evidence at protein level"/>
<feature type="chain" id="PRO_0000090692" description="Mitochondrial RNA-splicing protein MRS4">
    <location>
        <begin position="1"/>
        <end position="304"/>
    </location>
</feature>
<feature type="transmembrane region" description="Helical; Name=1" evidence="1">
    <location>
        <begin position="23"/>
        <end position="41"/>
    </location>
</feature>
<feature type="transmembrane region" description="Helical; Name=2" evidence="1">
    <location>
        <begin position="83"/>
        <end position="102"/>
    </location>
</feature>
<feature type="transmembrane region" description="Helical; Name=3" evidence="1">
    <location>
        <begin position="120"/>
        <end position="139"/>
    </location>
</feature>
<feature type="transmembrane region" description="Helical; Name=4" evidence="1">
    <location>
        <begin position="175"/>
        <end position="194"/>
    </location>
</feature>
<feature type="transmembrane region" description="Helical; Name=5" evidence="1">
    <location>
        <begin position="209"/>
        <end position="228"/>
    </location>
</feature>
<feature type="transmembrane region" description="Helical; Name=6" evidence="1">
    <location>
        <begin position="275"/>
        <end position="288"/>
    </location>
</feature>
<feature type="repeat" description="Solcar 1">
    <location>
        <begin position="21"/>
        <end position="108"/>
    </location>
</feature>
<feature type="repeat" description="Solcar 2">
    <location>
        <begin position="118"/>
        <end position="200"/>
    </location>
</feature>
<feature type="repeat" description="Solcar 3">
    <location>
        <begin position="207"/>
        <end position="300"/>
    </location>
</feature>
<gene>
    <name type="primary">MRS4</name>
    <name type="ordered locus">YKR052C</name>
</gene>